<keyword id="KW-0119">Carbohydrate metabolism</keyword>
<keyword id="KW-0961">Cell wall biogenesis/degradation</keyword>
<keyword id="KW-0136">Cellulose degradation</keyword>
<keyword id="KW-0325">Glycoprotein</keyword>
<keyword id="KW-0326">Glycosidase</keyword>
<keyword id="KW-0378">Hydrolase</keyword>
<keyword id="KW-0624">Polysaccharide degradation</keyword>
<keyword id="KW-1185">Reference proteome</keyword>
<keyword id="KW-0964">Secreted</keyword>
<keyword id="KW-0732">Signal</keyword>
<accession>Q652F9</accession>
<accession>A0A0P0WUX1</accession>
<accession>Q0DD41</accession>
<organism>
    <name type="scientific">Oryza sativa subsp. japonica</name>
    <name type="common">Rice</name>
    <dbReference type="NCBI Taxonomy" id="39947"/>
    <lineage>
        <taxon>Eukaryota</taxon>
        <taxon>Viridiplantae</taxon>
        <taxon>Streptophyta</taxon>
        <taxon>Embryophyta</taxon>
        <taxon>Tracheophyta</taxon>
        <taxon>Spermatophyta</taxon>
        <taxon>Magnoliopsida</taxon>
        <taxon>Liliopsida</taxon>
        <taxon>Poales</taxon>
        <taxon>Poaceae</taxon>
        <taxon>BOP clade</taxon>
        <taxon>Oryzoideae</taxon>
        <taxon>Oryzeae</taxon>
        <taxon>Oryzinae</taxon>
        <taxon>Oryza</taxon>
        <taxon>Oryza sativa</taxon>
    </lineage>
</organism>
<gene>
    <name type="primary">GLU13</name>
    <name type="ordered locus">Os06g0256900</name>
    <name type="ordered locus">LOC_Os06g14540</name>
    <name type="ORF">OsJ_020012</name>
    <name type="ORF">P0624H09.19</name>
</gene>
<reference key="1">
    <citation type="journal article" date="2005" name="Nature">
        <title>The map-based sequence of the rice genome.</title>
        <authorList>
            <consortium name="International rice genome sequencing project (IRGSP)"/>
        </authorList>
    </citation>
    <scope>NUCLEOTIDE SEQUENCE [LARGE SCALE GENOMIC DNA]</scope>
    <source>
        <strain>cv. Nipponbare</strain>
    </source>
</reference>
<reference key="2">
    <citation type="journal article" date="2008" name="Nucleic Acids Res.">
        <title>The rice annotation project database (RAP-DB): 2008 update.</title>
        <authorList>
            <consortium name="The rice annotation project (RAP)"/>
        </authorList>
    </citation>
    <scope>GENOME REANNOTATION</scope>
    <source>
        <strain>cv. Nipponbare</strain>
    </source>
</reference>
<reference key="3">
    <citation type="journal article" date="2013" name="Rice">
        <title>Improvement of the Oryza sativa Nipponbare reference genome using next generation sequence and optical map data.</title>
        <authorList>
            <person name="Kawahara Y."/>
            <person name="de la Bastide M."/>
            <person name="Hamilton J.P."/>
            <person name="Kanamori H."/>
            <person name="McCombie W.R."/>
            <person name="Ouyang S."/>
            <person name="Schwartz D.C."/>
            <person name="Tanaka T."/>
            <person name="Wu J."/>
            <person name="Zhou S."/>
            <person name="Childs K.L."/>
            <person name="Davidson R.M."/>
            <person name="Lin H."/>
            <person name="Quesada-Ocampo L."/>
            <person name="Vaillancourt B."/>
            <person name="Sakai H."/>
            <person name="Lee S.S."/>
            <person name="Kim J."/>
            <person name="Numa H."/>
            <person name="Itoh T."/>
            <person name="Buell C.R."/>
            <person name="Matsumoto T."/>
        </authorList>
    </citation>
    <scope>GENOME REANNOTATION</scope>
    <source>
        <strain>cv. Nipponbare</strain>
    </source>
</reference>
<reference key="4">
    <citation type="journal article" date="2005" name="PLoS Biol.">
        <title>The genomes of Oryza sativa: a history of duplications.</title>
        <authorList>
            <person name="Yu J."/>
            <person name="Wang J."/>
            <person name="Lin W."/>
            <person name="Li S."/>
            <person name="Li H."/>
            <person name="Zhou J."/>
            <person name="Ni P."/>
            <person name="Dong W."/>
            <person name="Hu S."/>
            <person name="Zeng C."/>
            <person name="Zhang J."/>
            <person name="Zhang Y."/>
            <person name="Li R."/>
            <person name="Xu Z."/>
            <person name="Li S."/>
            <person name="Li X."/>
            <person name="Zheng H."/>
            <person name="Cong L."/>
            <person name="Lin L."/>
            <person name="Yin J."/>
            <person name="Geng J."/>
            <person name="Li G."/>
            <person name="Shi J."/>
            <person name="Liu J."/>
            <person name="Lv H."/>
            <person name="Li J."/>
            <person name="Wang J."/>
            <person name="Deng Y."/>
            <person name="Ran L."/>
            <person name="Shi X."/>
            <person name="Wang X."/>
            <person name="Wu Q."/>
            <person name="Li C."/>
            <person name="Ren X."/>
            <person name="Wang J."/>
            <person name="Wang X."/>
            <person name="Li D."/>
            <person name="Liu D."/>
            <person name="Zhang X."/>
            <person name="Ji Z."/>
            <person name="Zhao W."/>
            <person name="Sun Y."/>
            <person name="Zhang Z."/>
            <person name="Bao J."/>
            <person name="Han Y."/>
            <person name="Dong L."/>
            <person name="Ji J."/>
            <person name="Chen P."/>
            <person name="Wu S."/>
            <person name="Liu J."/>
            <person name="Xiao Y."/>
            <person name="Bu D."/>
            <person name="Tan J."/>
            <person name="Yang L."/>
            <person name="Ye C."/>
            <person name="Zhang J."/>
            <person name="Xu J."/>
            <person name="Zhou Y."/>
            <person name="Yu Y."/>
            <person name="Zhang B."/>
            <person name="Zhuang S."/>
            <person name="Wei H."/>
            <person name="Liu B."/>
            <person name="Lei M."/>
            <person name="Yu H."/>
            <person name="Li Y."/>
            <person name="Xu H."/>
            <person name="Wei S."/>
            <person name="He X."/>
            <person name="Fang L."/>
            <person name="Zhang Z."/>
            <person name="Zhang Y."/>
            <person name="Huang X."/>
            <person name="Su Z."/>
            <person name="Tong W."/>
            <person name="Li J."/>
            <person name="Tong Z."/>
            <person name="Li S."/>
            <person name="Ye J."/>
            <person name="Wang L."/>
            <person name="Fang L."/>
            <person name="Lei T."/>
            <person name="Chen C.-S."/>
            <person name="Chen H.-C."/>
            <person name="Xu Z."/>
            <person name="Li H."/>
            <person name="Huang H."/>
            <person name="Zhang F."/>
            <person name="Xu H."/>
            <person name="Li N."/>
            <person name="Zhao C."/>
            <person name="Li S."/>
            <person name="Dong L."/>
            <person name="Huang Y."/>
            <person name="Li L."/>
            <person name="Xi Y."/>
            <person name="Qi Q."/>
            <person name="Li W."/>
            <person name="Zhang B."/>
            <person name="Hu W."/>
            <person name="Zhang Y."/>
            <person name="Tian X."/>
            <person name="Jiao Y."/>
            <person name="Liang X."/>
            <person name="Jin J."/>
            <person name="Gao L."/>
            <person name="Zheng W."/>
            <person name="Hao B."/>
            <person name="Liu S.-M."/>
            <person name="Wang W."/>
            <person name="Yuan L."/>
            <person name="Cao M."/>
            <person name="McDermott J."/>
            <person name="Samudrala R."/>
            <person name="Wang J."/>
            <person name="Wong G.K.-S."/>
            <person name="Yang H."/>
        </authorList>
    </citation>
    <scope>NUCLEOTIDE SEQUENCE [LARGE SCALE GENOMIC DNA]</scope>
    <source>
        <strain>cv. Nipponbare</strain>
    </source>
</reference>
<reference key="5">
    <citation type="journal article" date="2003" name="Science">
        <title>Collection, mapping, and annotation of over 28,000 cDNA clones from japonica rice.</title>
        <authorList>
            <consortium name="The rice full-length cDNA consortium"/>
        </authorList>
    </citation>
    <scope>NUCLEOTIDE SEQUENCE [LARGE SCALE MRNA]</scope>
    <source>
        <strain>cv. Nipponbare</strain>
    </source>
</reference>
<comment type="catalytic activity">
    <reaction>
        <text>Endohydrolysis of (1-&gt;4)-beta-D-glucosidic linkages in cellulose, lichenin and cereal beta-D-glucans.</text>
        <dbReference type="EC" id="3.2.1.4"/>
    </reaction>
</comment>
<comment type="subcellular location">
    <subcellularLocation>
        <location evidence="1">Secreted</location>
    </subcellularLocation>
</comment>
<comment type="similarity">
    <text evidence="5 6">Belongs to the glycosyl hydrolase 9 (cellulase E) family.</text>
</comment>
<proteinExistence type="evidence at transcript level"/>
<name>GUN17_ORYSJ</name>
<evidence type="ECO:0000250" key="1"/>
<evidence type="ECO:0000255" key="2"/>
<evidence type="ECO:0000255" key="3">
    <source>
        <dbReference type="PROSITE-ProRule" id="PRU10059"/>
    </source>
</evidence>
<evidence type="ECO:0000255" key="4">
    <source>
        <dbReference type="PROSITE-ProRule" id="PRU10060"/>
    </source>
</evidence>
<evidence type="ECO:0000255" key="5">
    <source>
        <dbReference type="PROSITE-ProRule" id="PRU10140"/>
    </source>
</evidence>
<evidence type="ECO:0000305" key="6"/>
<dbReference type="EC" id="3.2.1.4"/>
<dbReference type="EMBL" id="AP005619">
    <property type="protein sequence ID" value="BAD46308.1"/>
    <property type="molecule type" value="Genomic_DNA"/>
</dbReference>
<dbReference type="EMBL" id="AP008212">
    <property type="protein sequence ID" value="BAF19232.1"/>
    <property type="molecule type" value="Genomic_DNA"/>
</dbReference>
<dbReference type="EMBL" id="AP014962">
    <property type="protein sequence ID" value="BAS97102.1"/>
    <property type="molecule type" value="Genomic_DNA"/>
</dbReference>
<dbReference type="EMBL" id="CM000143">
    <property type="protein sequence ID" value="EAZ36529.1"/>
    <property type="molecule type" value="Genomic_DNA"/>
</dbReference>
<dbReference type="EMBL" id="AK060686">
    <property type="status" value="NOT_ANNOTATED_CDS"/>
    <property type="molecule type" value="mRNA"/>
</dbReference>
<dbReference type="RefSeq" id="XP_015641944.1">
    <property type="nucleotide sequence ID" value="XM_015786458.1"/>
</dbReference>
<dbReference type="SMR" id="Q652F9"/>
<dbReference type="FunCoup" id="Q652F9">
    <property type="interactions" value="158"/>
</dbReference>
<dbReference type="STRING" id="39947.Q652F9"/>
<dbReference type="CAZy" id="GH9">
    <property type="family name" value="Glycoside Hydrolase Family 9"/>
</dbReference>
<dbReference type="GlyCosmos" id="Q652F9">
    <property type="glycosylation" value="1 site, No reported glycans"/>
</dbReference>
<dbReference type="PaxDb" id="39947-Q652F9"/>
<dbReference type="EnsemblPlants" id="Os06t0256900-01">
    <property type="protein sequence ID" value="Os06t0256900-01"/>
    <property type="gene ID" value="Os06g0256900"/>
</dbReference>
<dbReference type="Gramene" id="Os06t0256900-01">
    <property type="protein sequence ID" value="Os06t0256900-01"/>
    <property type="gene ID" value="Os06g0256900"/>
</dbReference>
<dbReference type="KEGG" id="dosa:Os06g0256900"/>
<dbReference type="eggNOG" id="ENOG502QR9R">
    <property type="taxonomic scope" value="Eukaryota"/>
</dbReference>
<dbReference type="HOGENOM" id="CLU_008926_1_2_1"/>
<dbReference type="InParanoid" id="Q652F9"/>
<dbReference type="OMA" id="PERIGCK"/>
<dbReference type="OrthoDB" id="10257085at2759"/>
<dbReference type="Proteomes" id="UP000000763">
    <property type="component" value="Chromosome 6"/>
</dbReference>
<dbReference type="Proteomes" id="UP000007752">
    <property type="component" value="Chromosome 6"/>
</dbReference>
<dbReference type="Proteomes" id="UP000059680">
    <property type="component" value="Chromosome 6"/>
</dbReference>
<dbReference type="GO" id="GO:0005576">
    <property type="term" value="C:extracellular region"/>
    <property type="evidence" value="ECO:0007669"/>
    <property type="project" value="UniProtKB-SubCell"/>
</dbReference>
<dbReference type="GO" id="GO:0008810">
    <property type="term" value="F:cellulase activity"/>
    <property type="evidence" value="ECO:0007669"/>
    <property type="project" value="UniProtKB-EC"/>
</dbReference>
<dbReference type="GO" id="GO:0071555">
    <property type="term" value="P:cell wall organization"/>
    <property type="evidence" value="ECO:0007669"/>
    <property type="project" value="UniProtKB-KW"/>
</dbReference>
<dbReference type="GO" id="GO:0030245">
    <property type="term" value="P:cellulose catabolic process"/>
    <property type="evidence" value="ECO:0007669"/>
    <property type="project" value="UniProtKB-KW"/>
</dbReference>
<dbReference type="FunFam" id="1.50.10.10:FF:000020">
    <property type="entry name" value="Endoglucanase"/>
    <property type="match status" value="1"/>
</dbReference>
<dbReference type="Gene3D" id="1.50.10.10">
    <property type="match status" value="1"/>
</dbReference>
<dbReference type="InterPro" id="IPR008928">
    <property type="entry name" value="6-hairpin_glycosidase_sf"/>
</dbReference>
<dbReference type="InterPro" id="IPR012341">
    <property type="entry name" value="6hp_glycosidase-like_sf"/>
</dbReference>
<dbReference type="InterPro" id="IPR001701">
    <property type="entry name" value="Glyco_hydro_9"/>
</dbReference>
<dbReference type="InterPro" id="IPR033126">
    <property type="entry name" value="Glyco_hydro_9_Asp/Glu_AS"/>
</dbReference>
<dbReference type="InterPro" id="IPR018221">
    <property type="entry name" value="Glyco_hydro_9_His_AS"/>
</dbReference>
<dbReference type="PANTHER" id="PTHR22298">
    <property type="entry name" value="ENDO-1,4-BETA-GLUCANASE"/>
    <property type="match status" value="1"/>
</dbReference>
<dbReference type="Pfam" id="PF00759">
    <property type="entry name" value="Glyco_hydro_9"/>
    <property type="match status" value="1"/>
</dbReference>
<dbReference type="SUPFAM" id="SSF48208">
    <property type="entry name" value="Six-hairpin glycosidases"/>
    <property type="match status" value="1"/>
</dbReference>
<dbReference type="PROSITE" id="PS60032">
    <property type="entry name" value="GH9_1"/>
    <property type="match status" value="1"/>
</dbReference>
<dbReference type="PROSITE" id="PS00592">
    <property type="entry name" value="GH9_2"/>
    <property type="match status" value="1"/>
</dbReference>
<dbReference type="PROSITE" id="PS00698">
    <property type="entry name" value="GH9_3"/>
    <property type="match status" value="1"/>
</dbReference>
<protein>
    <recommendedName>
        <fullName>Endoglucanase 17</fullName>
        <ecNumber>3.2.1.4</ecNumber>
    </recommendedName>
    <alternativeName>
        <fullName>Endo-1,4-beta glucanase 17</fullName>
    </alternativeName>
    <alternativeName>
        <fullName>OsGLU13</fullName>
    </alternativeName>
</protein>
<sequence length="497" mass="54384">MAAAGGAVLLLVLATATSVTGQHDYSDALHKSILFFEGQRSGRLPPDQRLRWRRDSALNDGATAGVDLTGGYYDAGDNVKFGFPMAFTATLMSWGLIDFGRSFGAHAAEAREAVRWATDYLMKATATPNTVYVQVGDAFRDHSCWERPEDMDTPRTVYKVDPSHPGSDVAAETAAALAAASIVFRDADPDYSNRLLDRAIQVFEFADKYRGPYSSSLHAAVCPCYCDYSGYKDELLWGAAWLHKASRRREYRDYIKRNEVVLGASEAINEFGWDNKHAGINVLISKEVLMGKDEYFQSFRVNADNFICTLLPGISNHPQIQYSPGGLLFKVGNSNMQHVTSLSFLLLAYSNYLSHANVRVPCGTSSASPVQLRRVAKRQVDYILGDNPLRMSYMVGYGSRYPLRIHHRGSSLPSVAAHPAQIGCKAGATYYASAAPNPNLLVGAVVGGPSNTSDAFPDARAVFQQSEPTTYINAPLLGLLAYFSAHPNLAQSDLLYD</sequence>
<feature type="signal peptide" evidence="2">
    <location>
        <begin position="1"/>
        <end position="21"/>
    </location>
</feature>
<feature type="chain" id="PRO_0000249294" description="Endoglucanase 17">
    <location>
        <begin position="22"/>
        <end position="497"/>
    </location>
</feature>
<feature type="active site" description="Nucleophile" evidence="5">
    <location>
        <position position="77"/>
    </location>
</feature>
<feature type="active site" evidence="3">
    <location>
        <position position="406"/>
    </location>
</feature>
<feature type="active site" evidence="4">
    <location>
        <position position="458"/>
    </location>
</feature>
<feature type="active site" evidence="4">
    <location>
        <position position="467"/>
    </location>
</feature>
<feature type="glycosylation site" description="N-linked (GlcNAc...) asparagine" evidence="2">
    <location>
        <position position="451"/>
    </location>
</feature>
<feature type="sequence conflict" description="In Ref. 5; AK060686." evidence="6" ref="5">
    <original>V</original>
    <variation>A</variation>
    <location>
        <position position="331"/>
    </location>
</feature>